<proteinExistence type="evidence at protein level"/>
<feature type="signal peptide" evidence="2">
    <location>
        <begin position="1"/>
        <end position="25"/>
    </location>
</feature>
<feature type="chain" id="PRO_0000014859" description="MAM domain-containing glycosylphosphatidylinositol anchor protein 2">
    <location>
        <begin position="26"/>
        <end position="931"/>
    </location>
</feature>
<feature type="propeptide" id="PRO_0000292043" description="Removed in mature form" evidence="2">
    <location>
        <begin position="932"/>
        <end position="956"/>
    </location>
</feature>
<feature type="domain" description="Ig-like 1">
    <location>
        <begin position="27"/>
        <end position="127"/>
    </location>
</feature>
<feature type="domain" description="Ig-like 2">
    <location>
        <begin position="134"/>
        <end position="232"/>
    </location>
</feature>
<feature type="domain" description="Ig-like 3">
    <location>
        <begin position="242"/>
        <end position="328"/>
    </location>
</feature>
<feature type="domain" description="Ig-like 4">
    <location>
        <begin position="340"/>
        <end position="436"/>
    </location>
</feature>
<feature type="domain" description="Ig-like 5">
    <location>
        <begin position="442"/>
        <end position="533"/>
    </location>
</feature>
<feature type="domain" description="Ig-like 6">
    <location>
        <begin position="540"/>
        <end position="627"/>
    </location>
</feature>
<feature type="domain" description="Fibronectin type-III" evidence="5">
    <location>
        <begin position="638"/>
        <end position="739"/>
    </location>
</feature>
<feature type="domain" description="MAM" evidence="4">
    <location>
        <begin position="746"/>
        <end position="921"/>
    </location>
</feature>
<feature type="lipid moiety-binding region" description="GPI-anchor amidated aspartate" evidence="2">
    <location>
        <position position="931"/>
    </location>
</feature>
<feature type="glycosylation site" description="N-linked (GlcNAc...) asparagine" evidence="2">
    <location>
        <position position="92"/>
    </location>
</feature>
<feature type="glycosylation site" description="N-linked (GlcNAc...) asparagine" evidence="2">
    <location>
        <position position="213"/>
    </location>
</feature>
<feature type="glycosylation site" description="N-linked (GlcNAc...) asparagine" evidence="2">
    <location>
        <position position="237"/>
    </location>
</feature>
<feature type="glycosylation site" description="N-linked (GlcNAc...) asparagine" evidence="2">
    <location>
        <position position="434"/>
    </location>
</feature>
<feature type="glycosylation site" description="N-linked (GlcNAc...) asparagine" evidence="2">
    <location>
        <position position="443"/>
    </location>
</feature>
<feature type="glycosylation site" description="N-linked (GlcNAc...) asparagine" evidence="2">
    <location>
        <position position="504"/>
    </location>
</feature>
<feature type="glycosylation site" description="N-linked (GlcNAc...) asparagine" evidence="2">
    <location>
        <position position="610"/>
    </location>
</feature>
<feature type="glycosylation site" description="N-linked (GlcNAc...) asparagine" evidence="2">
    <location>
        <position position="703"/>
    </location>
</feature>
<feature type="disulfide bond" evidence="3">
    <location>
        <begin position="62"/>
        <end position="110"/>
    </location>
</feature>
<feature type="disulfide bond" evidence="3">
    <location>
        <begin position="159"/>
        <end position="216"/>
    </location>
</feature>
<feature type="disulfide bond" evidence="3">
    <location>
        <begin position="264"/>
        <end position="310"/>
    </location>
</feature>
<feature type="disulfide bond" evidence="3">
    <location>
        <begin position="359"/>
        <end position="417"/>
    </location>
</feature>
<feature type="disulfide bond" evidence="3">
    <location>
        <begin position="465"/>
        <end position="515"/>
    </location>
</feature>
<feature type="disulfide bond" evidence="3">
    <location>
        <begin position="561"/>
        <end position="611"/>
    </location>
</feature>
<feature type="splice variant" id="VSP_042468" description="In isoform 2." evidence="8">
    <location>
        <begin position="1"/>
        <end position="229"/>
    </location>
</feature>
<feature type="splice variant" id="VSP_045240" description="In isoform 3." evidence="7">
    <original>M</original>
    <variation>MSVWSAGLLRSARRRRRGRTDGRRFLLRRAVPGHLGLARARVERAWLAAGLLKVPLRTPWAGYVHVHVKM</variation>
    <location>
        <position position="1"/>
    </location>
</feature>
<feature type="sequence variant" id="VAR_059400" description="In dbSNP:rs12590500.">
    <original>V</original>
    <variation>F</variation>
    <location>
        <position position="608"/>
    </location>
</feature>
<feature type="sequence conflict" description="In Ref. 3; AAQ88492." evidence="8" ref="3">
    <original>SGQGVY</original>
    <variation>EHLVIQ</variation>
    <location>
        <begin position="19"/>
        <end position="24"/>
    </location>
</feature>
<feature type="sequence conflict" description="In Ref. 3; AAQ88492." evidence="8" ref="3">
    <location>
        <position position="71"/>
    </location>
</feature>
<feature type="sequence conflict" description="In Ref. 2; AK309211." evidence="8" ref="2">
    <original>E</original>
    <variation>Q</variation>
    <location>
        <position position="457"/>
    </location>
</feature>
<feature type="sequence conflict" description="In Ref. 2; AK309211." evidence="8" ref="2">
    <original>R</original>
    <variation>K</variation>
    <location>
        <position position="479"/>
    </location>
</feature>
<feature type="sequence conflict" description="In Ref. 2; AK309211." evidence="8" ref="2">
    <original>N</original>
    <variation>S</variation>
    <location>
        <position position="504"/>
    </location>
</feature>
<feature type="sequence conflict" description="In Ref. 3; AAQ88492." evidence="8" ref="3">
    <original>D</original>
    <variation>N</variation>
    <location>
        <position position="554"/>
    </location>
</feature>
<feature type="sequence conflict" description="In Ref. 2; AK309211." evidence="8" ref="2">
    <original>V</original>
    <variation>I</variation>
    <location>
        <position position="930"/>
    </location>
</feature>
<feature type="sequence conflict" description="In Ref. 2; AK309211." evidence="8" ref="2">
    <original>G</original>
    <variation>S</variation>
    <location sequence="Q7Z553-3">
        <position position="50"/>
    </location>
</feature>
<name>MDGA2_HUMAN</name>
<accession>Q7Z553</accession>
<accession>F6W3S7</accession>
<accession>J3KPX6</accession>
<dbReference type="EMBL" id="AY369208">
    <property type="protein sequence ID" value="AAQ73312.1"/>
    <property type="molecule type" value="mRNA"/>
</dbReference>
<dbReference type="EMBL" id="AY358125">
    <property type="protein sequence ID" value="AAQ88492.1"/>
    <property type="molecule type" value="mRNA"/>
</dbReference>
<dbReference type="EMBL" id="AK309211">
    <property type="status" value="NOT_ANNOTATED_CDS"/>
    <property type="molecule type" value="mRNA"/>
</dbReference>
<dbReference type="EMBL" id="AL079306">
    <property type="status" value="NOT_ANNOTATED_CDS"/>
    <property type="molecule type" value="Genomic_DNA"/>
</dbReference>
<dbReference type="EMBL" id="AL157792">
    <property type="status" value="NOT_ANNOTATED_CDS"/>
    <property type="molecule type" value="Genomic_DNA"/>
</dbReference>
<dbReference type="EMBL" id="AL162551">
    <property type="status" value="NOT_ANNOTATED_CDS"/>
    <property type="molecule type" value="Genomic_DNA"/>
</dbReference>
<dbReference type="EMBL" id="AL358832">
    <property type="status" value="NOT_ANNOTATED_CDS"/>
    <property type="molecule type" value="Genomic_DNA"/>
</dbReference>
<dbReference type="EMBL" id="AL359951">
    <property type="status" value="NOT_ANNOTATED_CDS"/>
    <property type="molecule type" value="Genomic_DNA"/>
</dbReference>
<dbReference type="EMBL" id="AL591771">
    <property type="status" value="NOT_ANNOTATED_CDS"/>
    <property type="molecule type" value="Genomic_DNA"/>
</dbReference>
<dbReference type="EMBL" id="AY328482">
    <property type="protein sequence ID" value="AAP97010.1"/>
    <property type="status" value="ALT_INIT"/>
    <property type="molecule type" value="mRNA"/>
</dbReference>
<dbReference type="CCDS" id="CCDS41948.1">
    <molecule id="Q7Z553-2"/>
</dbReference>
<dbReference type="CCDS" id="CCDS45098.4">
    <molecule id="Q7Z553-3"/>
</dbReference>
<dbReference type="RefSeq" id="NP_001106970.4">
    <molecule id="Q7Z553-3"/>
    <property type="nucleotide sequence ID" value="NM_001113498.3"/>
</dbReference>
<dbReference type="RefSeq" id="NP_878250.2">
    <molecule id="Q7Z553-2"/>
    <property type="nucleotide sequence ID" value="NM_182830.4"/>
</dbReference>
<dbReference type="RefSeq" id="XP_016876549.1">
    <property type="nucleotide sequence ID" value="XM_017021060.1"/>
</dbReference>
<dbReference type="RefSeq" id="XP_047287004.1">
    <molecule id="Q7Z553-2"/>
    <property type="nucleotide sequence ID" value="XM_047431048.1"/>
</dbReference>
<dbReference type="RefSeq" id="XP_047287005.1">
    <molecule id="Q7Z553-2"/>
    <property type="nucleotide sequence ID" value="XM_047431049.1"/>
</dbReference>
<dbReference type="RefSeq" id="XP_047287006.1">
    <molecule id="Q7Z553-2"/>
    <property type="nucleotide sequence ID" value="XM_047431050.1"/>
</dbReference>
<dbReference type="RefSeq" id="XP_054231480.1">
    <molecule id="Q7Z553-2"/>
    <property type="nucleotide sequence ID" value="XM_054375505.1"/>
</dbReference>
<dbReference type="RefSeq" id="XP_054231481.1">
    <molecule id="Q7Z553-2"/>
    <property type="nucleotide sequence ID" value="XM_054375506.1"/>
</dbReference>
<dbReference type="RefSeq" id="XP_054231482.1">
    <molecule id="Q7Z553-2"/>
    <property type="nucleotide sequence ID" value="XM_054375507.1"/>
</dbReference>
<dbReference type="SMR" id="Q7Z553"/>
<dbReference type="BioGRID" id="127785">
    <property type="interactions" value="2"/>
</dbReference>
<dbReference type="FunCoup" id="Q7Z553">
    <property type="interactions" value="309"/>
</dbReference>
<dbReference type="STRING" id="9606.ENSP00000405456"/>
<dbReference type="GlyCosmos" id="Q7Z553">
    <property type="glycosylation" value="8 sites, No reported glycans"/>
</dbReference>
<dbReference type="GlyGen" id="Q7Z553">
    <property type="glycosylation" value="9 sites, 9 N-linked glycans (1 site), 1 O-linked glycan (1 site)"/>
</dbReference>
<dbReference type="iPTMnet" id="Q7Z553"/>
<dbReference type="PhosphoSitePlus" id="Q7Z553"/>
<dbReference type="BioMuta" id="MDGA2"/>
<dbReference type="DMDM" id="46403175"/>
<dbReference type="jPOST" id="Q7Z553"/>
<dbReference type="MassIVE" id="Q7Z553"/>
<dbReference type="PaxDb" id="9606-ENSP00000382178"/>
<dbReference type="PeptideAtlas" id="Q7Z553"/>
<dbReference type="ProteomicsDB" id="69257">
    <molecule id="Q7Z553-1"/>
</dbReference>
<dbReference type="ProteomicsDB" id="69258">
    <molecule id="Q7Z553-2"/>
</dbReference>
<dbReference type="Antibodypedia" id="162">
    <property type="antibodies" value="93 antibodies from 17 providers"/>
</dbReference>
<dbReference type="DNASU" id="161357"/>
<dbReference type="Ensembl" id="ENST00000357362.7">
    <molecule id="Q7Z553-2"/>
    <property type="protein sequence ID" value="ENSP00000349925.3"/>
    <property type="gene ID" value="ENSG00000139915.22"/>
</dbReference>
<dbReference type="Ensembl" id="ENST00000399232.8">
    <molecule id="Q7Z553-3"/>
    <property type="protein sequence ID" value="ENSP00000382178.4"/>
    <property type="gene ID" value="ENSG00000139915.22"/>
</dbReference>
<dbReference type="GeneID" id="161357"/>
<dbReference type="KEGG" id="hsa:161357"/>
<dbReference type="MANE-Select" id="ENST00000399232.8">
    <molecule id="Q7Z553-3"/>
    <property type="protein sequence ID" value="ENSP00000382178.4"/>
    <property type="RefSeq nucleotide sequence ID" value="NM_001113498.3"/>
    <property type="RefSeq protein sequence ID" value="NP_001106970.4"/>
</dbReference>
<dbReference type="UCSC" id="uc001wwj.6">
    <molecule id="Q7Z553-1"/>
    <property type="organism name" value="human"/>
</dbReference>
<dbReference type="AGR" id="HGNC:19835"/>
<dbReference type="CTD" id="161357"/>
<dbReference type="DisGeNET" id="161357"/>
<dbReference type="GeneCards" id="MDGA2"/>
<dbReference type="HGNC" id="HGNC:19835">
    <property type="gene designation" value="MDGA2"/>
</dbReference>
<dbReference type="HPA" id="ENSG00000139915">
    <property type="expression patterns" value="Group enriched (brain, retina, testis)"/>
</dbReference>
<dbReference type="MalaCards" id="MDGA2"/>
<dbReference type="MIM" id="611128">
    <property type="type" value="gene"/>
</dbReference>
<dbReference type="neXtProt" id="NX_Q7Z553"/>
<dbReference type="OpenTargets" id="ENSG00000139915"/>
<dbReference type="PharmGKB" id="PA162395090"/>
<dbReference type="VEuPathDB" id="HostDB:ENSG00000139915"/>
<dbReference type="eggNOG" id="ENOG502QSMD">
    <property type="taxonomic scope" value="Eukaryota"/>
</dbReference>
<dbReference type="GeneTree" id="ENSGT00940000155369"/>
<dbReference type="HOGENOM" id="CLU_014908_0_0_1"/>
<dbReference type="InParanoid" id="Q7Z553"/>
<dbReference type="OMA" id="TGQFDAQ"/>
<dbReference type="OrthoDB" id="6107927at2759"/>
<dbReference type="PAN-GO" id="Q7Z553">
    <property type="GO annotations" value="1 GO annotation based on evolutionary models"/>
</dbReference>
<dbReference type="PhylomeDB" id="Q7Z553"/>
<dbReference type="TreeFam" id="TF330345"/>
<dbReference type="PathwayCommons" id="Q7Z553"/>
<dbReference type="Reactome" id="R-HSA-163125">
    <property type="pathway name" value="Post-translational modification: synthesis of GPI-anchored proteins"/>
</dbReference>
<dbReference type="SIGNOR" id="Q7Z553"/>
<dbReference type="BioGRID-ORCS" id="161357">
    <property type="hits" value="15 hits in 1143 CRISPR screens"/>
</dbReference>
<dbReference type="ChiTaRS" id="MDGA2">
    <property type="organism name" value="human"/>
</dbReference>
<dbReference type="GenomeRNAi" id="161357"/>
<dbReference type="Pharos" id="Q7Z553">
    <property type="development level" value="Tbio"/>
</dbReference>
<dbReference type="PRO" id="PR:Q7Z553"/>
<dbReference type="Proteomes" id="UP000005640">
    <property type="component" value="Chromosome 14"/>
</dbReference>
<dbReference type="RNAct" id="Q7Z553">
    <property type="molecule type" value="protein"/>
</dbReference>
<dbReference type="Bgee" id="ENSG00000139915">
    <property type="expression patterns" value="Expressed in cortical plate and 72 other cell types or tissues"/>
</dbReference>
<dbReference type="ExpressionAtlas" id="Q7Z553">
    <property type="expression patterns" value="baseline and differential"/>
</dbReference>
<dbReference type="GO" id="GO:0005576">
    <property type="term" value="C:extracellular region"/>
    <property type="evidence" value="ECO:0000304"/>
    <property type="project" value="Reactome"/>
</dbReference>
<dbReference type="GO" id="GO:0005886">
    <property type="term" value="C:plasma membrane"/>
    <property type="evidence" value="ECO:0000304"/>
    <property type="project" value="Reactome"/>
</dbReference>
<dbReference type="GO" id="GO:0098552">
    <property type="term" value="C:side of membrane"/>
    <property type="evidence" value="ECO:0007669"/>
    <property type="project" value="UniProtKB-KW"/>
</dbReference>
<dbReference type="GO" id="GO:0021522">
    <property type="term" value="P:spinal cord motor neuron differentiation"/>
    <property type="evidence" value="ECO:0000250"/>
    <property type="project" value="HGNC-UCL"/>
</dbReference>
<dbReference type="CDD" id="cd00096">
    <property type="entry name" value="Ig"/>
    <property type="match status" value="2"/>
</dbReference>
<dbReference type="CDD" id="cd06263">
    <property type="entry name" value="MAM"/>
    <property type="match status" value="1"/>
</dbReference>
<dbReference type="FunFam" id="2.60.40.10:FF:000240">
    <property type="entry name" value="MAM domain containing glycosylphosphatidylinositol anchor 1"/>
    <property type="match status" value="1"/>
</dbReference>
<dbReference type="FunFam" id="2.60.40.10:FF:000262">
    <property type="entry name" value="MAM domain containing glycosylphosphatidylinositol anchor 1"/>
    <property type="match status" value="1"/>
</dbReference>
<dbReference type="FunFam" id="2.60.40.10:FF:000303">
    <property type="entry name" value="MAM domain containing glycosylphosphatidylinositol anchor 1"/>
    <property type="match status" value="1"/>
</dbReference>
<dbReference type="FunFam" id="2.60.120.200:FF:000019">
    <property type="entry name" value="MAM domain containing glycosylphosphatidylinositol anchor 2"/>
    <property type="match status" value="1"/>
</dbReference>
<dbReference type="FunFam" id="2.60.40.10:FF:000165">
    <property type="entry name" value="MAM domain containing glycosylphosphatidylinositol anchor 2"/>
    <property type="match status" value="1"/>
</dbReference>
<dbReference type="FunFam" id="2.60.40.10:FF:000654">
    <property type="entry name" value="MAM domain containing glycosylphosphatidylinositol anchor 2"/>
    <property type="match status" value="1"/>
</dbReference>
<dbReference type="FunFam" id="2.60.40.10:FF:000243">
    <property type="entry name" value="MAM domain-containing glycosylphosphatidylinositol anchor protein 1"/>
    <property type="match status" value="1"/>
</dbReference>
<dbReference type="Gene3D" id="2.60.120.200">
    <property type="match status" value="1"/>
</dbReference>
<dbReference type="Gene3D" id="2.60.40.10">
    <property type="entry name" value="Immunoglobulins"/>
    <property type="match status" value="7"/>
</dbReference>
<dbReference type="InterPro" id="IPR050958">
    <property type="entry name" value="Cell_Adh-Cytoskel_Orgn"/>
</dbReference>
<dbReference type="InterPro" id="IPR013320">
    <property type="entry name" value="ConA-like_dom_sf"/>
</dbReference>
<dbReference type="InterPro" id="IPR003961">
    <property type="entry name" value="FN3_dom"/>
</dbReference>
<dbReference type="InterPro" id="IPR036116">
    <property type="entry name" value="FN3_sf"/>
</dbReference>
<dbReference type="InterPro" id="IPR007110">
    <property type="entry name" value="Ig-like_dom"/>
</dbReference>
<dbReference type="InterPro" id="IPR036179">
    <property type="entry name" value="Ig-like_dom_sf"/>
</dbReference>
<dbReference type="InterPro" id="IPR013783">
    <property type="entry name" value="Ig-like_fold"/>
</dbReference>
<dbReference type="InterPro" id="IPR013098">
    <property type="entry name" value="Ig_I-set"/>
</dbReference>
<dbReference type="InterPro" id="IPR003599">
    <property type="entry name" value="Ig_sub"/>
</dbReference>
<dbReference type="InterPro" id="IPR003598">
    <property type="entry name" value="Ig_sub2"/>
</dbReference>
<dbReference type="InterPro" id="IPR000998">
    <property type="entry name" value="MAM_dom"/>
</dbReference>
<dbReference type="PANTHER" id="PTHR45080">
    <property type="entry name" value="CONTACTIN 5"/>
    <property type="match status" value="1"/>
</dbReference>
<dbReference type="PANTHER" id="PTHR45080:SF35">
    <property type="entry name" value="MAM DOMAIN-CONTAINING GLYCOSYLPHOSPHATIDYLINOSITOL ANCHOR 2"/>
    <property type="match status" value="1"/>
</dbReference>
<dbReference type="Pfam" id="PF07679">
    <property type="entry name" value="I-set"/>
    <property type="match status" value="1"/>
</dbReference>
<dbReference type="Pfam" id="PF13927">
    <property type="entry name" value="Ig_3"/>
    <property type="match status" value="4"/>
</dbReference>
<dbReference type="Pfam" id="PF00629">
    <property type="entry name" value="MAM"/>
    <property type="match status" value="1"/>
</dbReference>
<dbReference type="SMART" id="SM00409">
    <property type="entry name" value="IG"/>
    <property type="match status" value="6"/>
</dbReference>
<dbReference type="SMART" id="SM00408">
    <property type="entry name" value="IGc2"/>
    <property type="match status" value="6"/>
</dbReference>
<dbReference type="SMART" id="SM00137">
    <property type="entry name" value="MAM"/>
    <property type="match status" value="1"/>
</dbReference>
<dbReference type="SUPFAM" id="SSF49899">
    <property type="entry name" value="Concanavalin A-like lectins/glucanases"/>
    <property type="match status" value="1"/>
</dbReference>
<dbReference type="SUPFAM" id="SSF49265">
    <property type="entry name" value="Fibronectin type III"/>
    <property type="match status" value="1"/>
</dbReference>
<dbReference type="SUPFAM" id="SSF48726">
    <property type="entry name" value="Immunoglobulin"/>
    <property type="match status" value="6"/>
</dbReference>
<dbReference type="PROSITE" id="PS50853">
    <property type="entry name" value="FN3"/>
    <property type="match status" value="1"/>
</dbReference>
<dbReference type="PROSITE" id="PS50835">
    <property type="entry name" value="IG_LIKE"/>
    <property type="match status" value="6"/>
</dbReference>
<dbReference type="PROSITE" id="PS50060">
    <property type="entry name" value="MAM_2"/>
    <property type="match status" value="1"/>
</dbReference>
<reference key="1">
    <citation type="submission" date="2003-08" db="EMBL/GenBank/DDBJ databases">
        <authorList>
            <person name="Huang C.Q."/>
            <person name="Wu S.L."/>
            <person name="Liu S."/>
        </authorList>
    </citation>
    <scope>NUCLEOTIDE SEQUENCE [MRNA] (ISOFORM 1)</scope>
</reference>
<reference key="2">
    <citation type="journal article" date="2004" name="Nat. Genet.">
        <title>Complete sequencing and characterization of 21,243 full-length human cDNAs.</title>
        <authorList>
            <person name="Ota T."/>
            <person name="Suzuki Y."/>
            <person name="Nishikawa T."/>
            <person name="Otsuki T."/>
            <person name="Sugiyama T."/>
            <person name="Irie R."/>
            <person name="Wakamatsu A."/>
            <person name="Hayashi K."/>
            <person name="Sato H."/>
            <person name="Nagai K."/>
            <person name="Kimura K."/>
            <person name="Makita H."/>
            <person name="Sekine M."/>
            <person name="Obayashi M."/>
            <person name="Nishi T."/>
            <person name="Shibahara T."/>
            <person name="Tanaka T."/>
            <person name="Ishii S."/>
            <person name="Yamamoto J."/>
            <person name="Saito K."/>
            <person name="Kawai Y."/>
            <person name="Isono Y."/>
            <person name="Nakamura Y."/>
            <person name="Nagahari K."/>
            <person name="Murakami K."/>
            <person name="Yasuda T."/>
            <person name="Iwayanagi T."/>
            <person name="Wagatsuma M."/>
            <person name="Shiratori A."/>
            <person name="Sudo H."/>
            <person name="Hosoiri T."/>
            <person name="Kaku Y."/>
            <person name="Kodaira H."/>
            <person name="Kondo H."/>
            <person name="Sugawara M."/>
            <person name="Takahashi M."/>
            <person name="Kanda K."/>
            <person name="Yokoi T."/>
            <person name="Furuya T."/>
            <person name="Kikkawa E."/>
            <person name="Omura Y."/>
            <person name="Abe K."/>
            <person name="Kamihara K."/>
            <person name="Katsuta N."/>
            <person name="Sato K."/>
            <person name="Tanikawa M."/>
            <person name="Yamazaki M."/>
            <person name="Ninomiya K."/>
            <person name="Ishibashi T."/>
            <person name="Yamashita H."/>
            <person name="Murakawa K."/>
            <person name="Fujimori K."/>
            <person name="Tanai H."/>
            <person name="Kimata M."/>
            <person name="Watanabe M."/>
            <person name="Hiraoka S."/>
            <person name="Chiba Y."/>
            <person name="Ishida S."/>
            <person name="Ono Y."/>
            <person name="Takiguchi S."/>
            <person name="Watanabe S."/>
            <person name="Yosida M."/>
            <person name="Hotuta T."/>
            <person name="Kusano J."/>
            <person name="Kanehori K."/>
            <person name="Takahashi-Fujii A."/>
            <person name="Hara H."/>
            <person name="Tanase T.-O."/>
            <person name="Nomura Y."/>
            <person name="Togiya S."/>
            <person name="Komai F."/>
            <person name="Hara R."/>
            <person name="Takeuchi K."/>
            <person name="Arita M."/>
            <person name="Imose N."/>
            <person name="Musashino K."/>
            <person name="Yuuki H."/>
            <person name="Oshima A."/>
            <person name="Sasaki N."/>
            <person name="Aotsuka S."/>
            <person name="Yoshikawa Y."/>
            <person name="Matsunawa H."/>
            <person name="Ichihara T."/>
            <person name="Shiohata N."/>
            <person name="Sano S."/>
            <person name="Moriya S."/>
            <person name="Momiyama H."/>
            <person name="Satoh N."/>
            <person name="Takami S."/>
            <person name="Terashima Y."/>
            <person name="Suzuki O."/>
            <person name="Nakagawa S."/>
            <person name="Senoh A."/>
            <person name="Mizoguchi H."/>
            <person name="Goto Y."/>
            <person name="Shimizu F."/>
            <person name="Wakebe H."/>
            <person name="Hishigaki H."/>
            <person name="Watanabe T."/>
            <person name="Sugiyama A."/>
            <person name="Takemoto M."/>
            <person name="Kawakami B."/>
            <person name="Yamazaki M."/>
            <person name="Watanabe K."/>
            <person name="Kumagai A."/>
            <person name="Itakura S."/>
            <person name="Fukuzumi Y."/>
            <person name="Fujimori Y."/>
            <person name="Komiyama M."/>
            <person name="Tashiro H."/>
            <person name="Tanigami A."/>
            <person name="Fujiwara T."/>
            <person name="Ono T."/>
            <person name="Yamada K."/>
            <person name="Fujii Y."/>
            <person name="Ozaki K."/>
            <person name="Hirao M."/>
            <person name="Ohmori Y."/>
            <person name="Kawabata A."/>
            <person name="Hikiji T."/>
            <person name="Kobatake N."/>
            <person name="Inagaki H."/>
            <person name="Ikema Y."/>
            <person name="Okamoto S."/>
            <person name="Okitani R."/>
            <person name="Kawakami T."/>
            <person name="Noguchi S."/>
            <person name="Itoh T."/>
            <person name="Shigeta K."/>
            <person name="Senba T."/>
            <person name="Matsumura K."/>
            <person name="Nakajima Y."/>
            <person name="Mizuno T."/>
            <person name="Morinaga M."/>
            <person name="Sasaki M."/>
            <person name="Togashi T."/>
            <person name="Oyama M."/>
            <person name="Hata H."/>
            <person name="Watanabe M."/>
            <person name="Komatsu T."/>
            <person name="Mizushima-Sugano J."/>
            <person name="Satoh T."/>
            <person name="Shirai Y."/>
            <person name="Takahashi Y."/>
            <person name="Nakagawa K."/>
            <person name="Okumura K."/>
            <person name="Nagase T."/>
            <person name="Nomura N."/>
            <person name="Kikuchi H."/>
            <person name="Masuho Y."/>
            <person name="Yamashita R."/>
            <person name="Nakai K."/>
            <person name="Yada T."/>
            <person name="Nakamura Y."/>
            <person name="Ohara O."/>
            <person name="Isogai T."/>
            <person name="Sugano S."/>
        </authorList>
    </citation>
    <scope>NUCLEOTIDE SEQUENCE [LARGE SCALE MRNA] (ISOFORM 3)</scope>
    <source>
        <tissue>Thalamus</tissue>
    </source>
</reference>
<reference key="3">
    <citation type="journal article" date="2003" name="Nature">
        <title>The DNA sequence and analysis of human chromosome 14.</title>
        <authorList>
            <person name="Heilig R."/>
            <person name="Eckenberg R."/>
            <person name="Petit J.-L."/>
            <person name="Fonknechten N."/>
            <person name="Da Silva C."/>
            <person name="Cattolico L."/>
            <person name="Levy M."/>
            <person name="Barbe V."/>
            <person name="De Berardinis V."/>
            <person name="Ureta-Vidal A."/>
            <person name="Pelletier E."/>
            <person name="Vico V."/>
            <person name="Anthouard V."/>
            <person name="Rowen L."/>
            <person name="Madan A."/>
            <person name="Qin S."/>
            <person name="Sun H."/>
            <person name="Du H."/>
            <person name="Pepin K."/>
            <person name="Artiguenave F."/>
            <person name="Robert C."/>
            <person name="Cruaud C."/>
            <person name="Bruels T."/>
            <person name="Jaillon O."/>
            <person name="Friedlander L."/>
            <person name="Samson G."/>
            <person name="Brottier P."/>
            <person name="Cure S."/>
            <person name="Segurens B."/>
            <person name="Aniere F."/>
            <person name="Samain S."/>
            <person name="Crespeau H."/>
            <person name="Abbasi N."/>
            <person name="Aiach N."/>
            <person name="Boscus D."/>
            <person name="Dickhoff R."/>
            <person name="Dors M."/>
            <person name="Dubois I."/>
            <person name="Friedman C."/>
            <person name="Gouyvenoux M."/>
            <person name="James R."/>
            <person name="Madan A."/>
            <person name="Mairey-Estrada B."/>
            <person name="Mangenot S."/>
            <person name="Martins N."/>
            <person name="Menard M."/>
            <person name="Oztas S."/>
            <person name="Ratcliffe A."/>
            <person name="Shaffer T."/>
            <person name="Trask B."/>
            <person name="Vacherie B."/>
            <person name="Bellemere C."/>
            <person name="Belser C."/>
            <person name="Besnard-Gonnet M."/>
            <person name="Bartol-Mavel D."/>
            <person name="Boutard M."/>
            <person name="Briez-Silla S."/>
            <person name="Combette S."/>
            <person name="Dufosse-Laurent V."/>
            <person name="Ferron C."/>
            <person name="Lechaplais C."/>
            <person name="Louesse C."/>
            <person name="Muselet D."/>
            <person name="Magdelenat G."/>
            <person name="Pateau E."/>
            <person name="Petit E."/>
            <person name="Sirvain-Trukniewicz P."/>
            <person name="Trybou A."/>
            <person name="Vega-Czarny N."/>
            <person name="Bataille E."/>
            <person name="Bluet E."/>
            <person name="Bordelais I."/>
            <person name="Dubois M."/>
            <person name="Dumont C."/>
            <person name="Guerin T."/>
            <person name="Haffray S."/>
            <person name="Hammadi R."/>
            <person name="Muanga J."/>
            <person name="Pellouin V."/>
            <person name="Robert D."/>
            <person name="Wunderle E."/>
            <person name="Gauguet G."/>
            <person name="Roy A."/>
            <person name="Sainte-Marthe L."/>
            <person name="Verdier J."/>
            <person name="Verdier-Discala C."/>
            <person name="Hillier L.W."/>
            <person name="Fulton L."/>
            <person name="McPherson J."/>
            <person name="Matsuda F."/>
            <person name="Wilson R."/>
            <person name="Scarpelli C."/>
            <person name="Gyapay G."/>
            <person name="Wincker P."/>
            <person name="Saurin W."/>
            <person name="Quetier F."/>
            <person name="Waterston R."/>
            <person name="Hood L."/>
            <person name="Weissenbach J."/>
        </authorList>
    </citation>
    <scope>NUCLEOTIDE SEQUENCE [LARGE SCALE GENOMIC DNA]</scope>
</reference>
<reference key="4">
    <citation type="journal article" date="2003" name="Genome Res.">
        <title>The secreted protein discovery initiative (SPDI), a large-scale effort to identify novel human secreted and transmembrane proteins: a bioinformatics assessment.</title>
        <authorList>
            <person name="Clark H.F."/>
            <person name="Gurney A.L."/>
            <person name="Abaya E."/>
            <person name="Baker K."/>
            <person name="Baldwin D.T."/>
            <person name="Brush J."/>
            <person name="Chen J."/>
            <person name="Chow B."/>
            <person name="Chui C."/>
            <person name="Crowley C."/>
            <person name="Currell B."/>
            <person name="Deuel B."/>
            <person name="Dowd P."/>
            <person name="Eaton D."/>
            <person name="Foster J.S."/>
            <person name="Grimaldi C."/>
            <person name="Gu Q."/>
            <person name="Hass P.E."/>
            <person name="Heldens S."/>
            <person name="Huang A."/>
            <person name="Kim H.S."/>
            <person name="Klimowski L."/>
            <person name="Jin Y."/>
            <person name="Johnson S."/>
            <person name="Lee J."/>
            <person name="Lewis L."/>
            <person name="Liao D."/>
            <person name="Mark M.R."/>
            <person name="Robbie E."/>
            <person name="Sanchez C."/>
            <person name="Schoenfeld J."/>
            <person name="Seshagiri S."/>
            <person name="Simmons L."/>
            <person name="Singh J."/>
            <person name="Smith V."/>
            <person name="Stinson J."/>
            <person name="Vagts A."/>
            <person name="Vandlen R.L."/>
            <person name="Watanabe C."/>
            <person name="Wieand D."/>
            <person name="Woods K."/>
            <person name="Xie M.-H."/>
            <person name="Yansura D.G."/>
            <person name="Yi S."/>
            <person name="Yu G."/>
            <person name="Yuan J."/>
            <person name="Zhang M."/>
            <person name="Zhang Z."/>
            <person name="Goddard A.D."/>
            <person name="Wood W.I."/>
            <person name="Godowski P.J."/>
            <person name="Gray A.M."/>
        </authorList>
    </citation>
    <scope>NUCLEOTIDE SEQUENCE [LARGE SCALE MRNA] OF 19-956 (ISOFORM 1)</scope>
</reference>
<reference key="5">
    <citation type="submission" date="2003-06" db="EMBL/GenBank/DDBJ databases">
        <title>Cloning and characterization of a novel human MAMDC1 gene.</title>
        <authorList>
            <person name="Shan Y.X."/>
            <person name="Yu L."/>
        </authorList>
    </citation>
    <scope>NUCLEOTIDE SEQUENCE [MRNA] OF 335-956 (ISOFORMS 1/2)</scope>
</reference>
<reference key="6">
    <citation type="journal article" date="2009" name="PLoS ONE">
        <title>Identification of MAMDC1 as a candidate susceptibility gene for systemic lupus erythematosus (SLE).</title>
        <authorList>
            <person name="Hellquist A."/>
            <person name="Zucchelli M."/>
            <person name="Lindgren C.M."/>
            <person name="Saarialho-Kere U."/>
            <person name="Jaervinen T.M."/>
            <person name="Koskenmies S."/>
            <person name="Julkunen H."/>
            <person name="Onkamo P."/>
            <person name="Skoog T."/>
            <person name="Panelius J."/>
            <person name="Raeisanen-Sokolowski A."/>
            <person name="Hasan T."/>
            <person name="Widen E."/>
            <person name="Gunnarson I."/>
            <person name="Svenungsson E."/>
            <person name="Padyukov L."/>
            <person name="Assadi G."/>
            <person name="Berglind L."/>
            <person name="Maekelae V.V."/>
            <person name="Kivinen K."/>
            <person name="Wong A."/>
            <person name="Cunningham Graham D.S."/>
            <person name="Vyse T.J."/>
            <person name="D'Amato M."/>
            <person name="Kere J."/>
        </authorList>
    </citation>
    <scope>TISSUE SPECIFICITY</scope>
</reference>
<comment type="function">
    <text evidence="1">May be involved in cell-cell interactions.</text>
</comment>
<comment type="subunit">
    <text evidence="1">Interacts (through the Ig-like domains) with NLGN2.</text>
</comment>
<comment type="subcellular location">
    <subcellularLocation>
        <location evidence="8">Cell membrane</location>
        <topology evidence="8">Lipid-anchor</topology>
        <topology evidence="8">GPI-anchor</topology>
    </subcellularLocation>
</comment>
<comment type="alternative products">
    <event type="alternative splicing"/>
    <isoform>
        <id>Q7Z553-1</id>
        <name>1</name>
        <sequence type="displayed"/>
    </isoform>
    <isoform>
        <id>Q7Z553-2</id>
        <name>2</name>
        <sequence type="described" ref="VSP_042468"/>
    </isoform>
    <isoform>
        <id>Q7Z553-3</id>
        <name>3</name>
        <sequence type="described" ref="VSP_045240"/>
    </isoform>
</comment>
<comment type="tissue specificity">
    <text evidence="6">Detected in Leydig cells, syncytiotrophoblast, duodenal villi epithelial cells and neutrophils from kidney and cutaneous squamous cell carcinoma (at protein level).</text>
</comment>
<comment type="sequence caution" evidence="8">
    <conflict type="erroneous initiation">
        <sequence resource="EMBL-CDS" id="AAP97010"/>
    </conflict>
    <text>Truncated N-terminus.</text>
</comment>
<organism>
    <name type="scientific">Homo sapiens</name>
    <name type="common">Human</name>
    <dbReference type="NCBI Taxonomy" id="9606"/>
    <lineage>
        <taxon>Eukaryota</taxon>
        <taxon>Metazoa</taxon>
        <taxon>Chordata</taxon>
        <taxon>Craniata</taxon>
        <taxon>Vertebrata</taxon>
        <taxon>Euteleostomi</taxon>
        <taxon>Mammalia</taxon>
        <taxon>Eutheria</taxon>
        <taxon>Euarchontoglires</taxon>
        <taxon>Primates</taxon>
        <taxon>Haplorrhini</taxon>
        <taxon>Catarrhini</taxon>
        <taxon>Hominidae</taxon>
        <taxon>Homo</taxon>
    </lineage>
</organism>
<keyword id="KW-0025">Alternative splicing</keyword>
<keyword id="KW-1003">Cell membrane</keyword>
<keyword id="KW-1015">Disulfide bond</keyword>
<keyword id="KW-0325">Glycoprotein</keyword>
<keyword id="KW-0336">GPI-anchor</keyword>
<keyword id="KW-0393">Immunoglobulin domain</keyword>
<keyword id="KW-0449">Lipoprotein</keyword>
<keyword id="KW-0472">Membrane</keyword>
<keyword id="KW-1267">Proteomics identification</keyword>
<keyword id="KW-1185">Reference proteome</keyword>
<keyword id="KW-0677">Repeat</keyword>
<keyword id="KW-0732">Signal</keyword>
<sequence>MDLLYGLVWLLTVLLEGISGQGVYAPPTVRIVHSGLACNIEEERYSERVYTIREGETLELTCLVTGHPRPQIRWTKTAGSASDRFQDSSVFNETLRITNIQRHQGGRYYCKAENGLGSPAIKSIRVDVYYLDDPVVTVHQSIGEAKEQFYYERTVFLRCVANSNPPVRYSWRRGQEVLLQGSDKGVEIYEPFFTQGETKILKLKNLRPQDYANYSCIASVRNVCNIPDKMVSFRLSNKTASPSIKLLVDDPIVVNPGEAITLVCVTTGGEPAPSLTWVRSFGTLPEKTVLNGGTLTIPAITSDDAGTYSCIANNNVGNPAKKSTNIIVRALKKGRFWITPDPYHKDDNIQIGREVKISCQVEAVPSEELTFSWFKNGRPLRSSERMVITQTDPDVSPGTTNLDIIDLKFTDFGTYTCVASLKGGGISDISIDVNISSSTVPPNLTVPQEKSPLVTREGDTIELQCQVTGKPKPIILWSRADKEVAMPDGSMQMESYDGTLRIVNVSREMSGMYRCQTSQYNGFNVKPREALVQLIVQYPPAVEPAFLEIRQGQDRSVTMSCRVLRAYPIRVLTYEWRLGNKLLRTGQFDSQEYTEYAVKSLSNENYGVYNCSIINEAGAGRCSFLVTGKAYAPEFYYDTYNPVWQNRHRVYSYSLQWTQMNPDAVDRIVAYRLGIRQAGQQRWWEQEIKINGNIQKGELITYNLTELIKPEAYEVRLTPLTKFGEGDSTIRVIKYSAPVNPHLREFHCGFEDGNICLFTQDDTDNFDWTKQSTATRNTKYTPNTGPNADRSGSKEGFYMYIETSRPRLEGEKARLLSPVFSIAPKNPYGPTNTAYCFSFFYHMYGQHIGVLNVYLRLKGQTTIENPLWSSSGNKGQRWNEAHVNIYPITSFQLIFEGIRGPGIEGDIAIDDVSIAEGECAKQDLATKNSVDGAVGILVHIWLFPIIVLISILSPRR</sequence>
<evidence type="ECO:0000250" key="1"/>
<evidence type="ECO:0000255" key="2"/>
<evidence type="ECO:0000255" key="3">
    <source>
        <dbReference type="PROSITE-ProRule" id="PRU00114"/>
    </source>
</evidence>
<evidence type="ECO:0000255" key="4">
    <source>
        <dbReference type="PROSITE-ProRule" id="PRU00128"/>
    </source>
</evidence>
<evidence type="ECO:0000255" key="5">
    <source>
        <dbReference type="PROSITE-ProRule" id="PRU00316"/>
    </source>
</evidence>
<evidence type="ECO:0000269" key="6">
    <source>
    </source>
</evidence>
<evidence type="ECO:0000303" key="7">
    <source>
    </source>
</evidence>
<evidence type="ECO:0000305" key="8"/>
<gene>
    <name type="primary">MDGA2</name>
    <name type="synonym">MAMDC1</name>
    <name type="ORF">UNQ8188/PRO23197</name>
</gene>
<protein>
    <recommendedName>
        <fullName>MAM domain-containing glycosylphosphatidylinositol anchor protein 2</fullName>
    </recommendedName>
    <alternativeName>
        <fullName>MAM domain-containing protein 1</fullName>
    </alternativeName>
</protein>